<name>SYP_SERP5</name>
<sequence length="572" mass="63578">MRTSQYLLSTLKETPADAEVISHQLMLRAGMIRKLASGLYTWLPTGLRVLKKVENIVREEMNNANAIEVCMPVVQPADLWQESGRWEQYGPELLRFVDRGDRPFVLGPTHEEVITDLIRNEISSYKQLPLNFFQIQTKFRDEVRPRFGVMRSREFLMKDAYSFHTSQESLQATYEAMYEAYSKIFSRMGLDFRPVHADTGSIGGSASHEFQVLADSGEDDIVFSTGSDFAANIELAEAVAPAEPRAAASEELRIVDTPNAKTIAELVEQFQLPVTKTVKTLLVRAKEESGHKLVALLVRGDHELNEIKAEKLPQVAAPLVFATEEEIRAIVGAGPGSLGPVNLQVPVVADRSVAAMSDFGAGANIDGKHYFGINWERDLPLPQVADIRNVVEGDASPDGKGTLLIKRGIEVGHIFQLGTKYSEAMKATVQGEDGRNQVLTMGCYGIGVTRVVAAAIEQNHDERGIIWPDAIAPFQVAILPMNMHKSFRVQALAEELYNTLRSHGIDVILDDRKERPGVMFADMELIGVPHSIVIGDRNLDSEEIEYKNRRVGEKQMIKTGEVIDFLLGQIKR</sequence>
<feature type="chain" id="PRO_1000069158" description="Proline--tRNA ligase">
    <location>
        <begin position="1"/>
        <end position="572"/>
    </location>
</feature>
<comment type="function">
    <text evidence="1">Catalyzes the attachment of proline to tRNA(Pro) in a two-step reaction: proline is first activated by ATP to form Pro-AMP and then transferred to the acceptor end of tRNA(Pro). As ProRS can inadvertently accommodate and process non-cognate amino acids such as alanine and cysteine, to avoid such errors it has two additional distinct editing activities against alanine. One activity is designated as 'pretransfer' editing and involves the tRNA(Pro)-independent hydrolysis of activated Ala-AMP. The other activity is designated 'posttransfer' editing and involves deacylation of mischarged Ala-tRNA(Pro). The misacylated Cys-tRNA(Pro) is not edited by ProRS.</text>
</comment>
<comment type="catalytic activity">
    <reaction evidence="1">
        <text>tRNA(Pro) + L-proline + ATP = L-prolyl-tRNA(Pro) + AMP + diphosphate</text>
        <dbReference type="Rhea" id="RHEA:14305"/>
        <dbReference type="Rhea" id="RHEA-COMP:9700"/>
        <dbReference type="Rhea" id="RHEA-COMP:9702"/>
        <dbReference type="ChEBI" id="CHEBI:30616"/>
        <dbReference type="ChEBI" id="CHEBI:33019"/>
        <dbReference type="ChEBI" id="CHEBI:60039"/>
        <dbReference type="ChEBI" id="CHEBI:78442"/>
        <dbReference type="ChEBI" id="CHEBI:78532"/>
        <dbReference type="ChEBI" id="CHEBI:456215"/>
        <dbReference type="EC" id="6.1.1.15"/>
    </reaction>
</comment>
<comment type="subunit">
    <text evidence="1">Homodimer.</text>
</comment>
<comment type="subcellular location">
    <subcellularLocation>
        <location evidence="1">Cytoplasm</location>
    </subcellularLocation>
</comment>
<comment type="domain">
    <text evidence="1">Consists of three domains: the N-terminal catalytic domain, the editing domain and the C-terminal anticodon-binding domain.</text>
</comment>
<comment type="similarity">
    <text evidence="1">Belongs to the class-II aminoacyl-tRNA synthetase family. ProS type 1 subfamily.</text>
</comment>
<gene>
    <name evidence="1" type="primary">proS</name>
    <name type="ordered locus">Spro_3758</name>
</gene>
<accession>A8GIB4</accession>
<protein>
    <recommendedName>
        <fullName evidence="1">Proline--tRNA ligase</fullName>
        <ecNumber evidence="1">6.1.1.15</ecNumber>
    </recommendedName>
    <alternativeName>
        <fullName evidence="1">Prolyl-tRNA synthetase</fullName>
        <shortName evidence="1">ProRS</shortName>
    </alternativeName>
</protein>
<dbReference type="EC" id="6.1.1.15" evidence="1"/>
<dbReference type="EMBL" id="CP000826">
    <property type="protein sequence ID" value="ABV42854.1"/>
    <property type="molecule type" value="Genomic_DNA"/>
</dbReference>
<dbReference type="SMR" id="A8GIB4"/>
<dbReference type="STRING" id="399741.Spro_3758"/>
<dbReference type="KEGG" id="spe:Spro_3758"/>
<dbReference type="eggNOG" id="COG0442">
    <property type="taxonomic scope" value="Bacteria"/>
</dbReference>
<dbReference type="HOGENOM" id="CLU_016739_0_0_6"/>
<dbReference type="OrthoDB" id="9809052at2"/>
<dbReference type="GO" id="GO:0005829">
    <property type="term" value="C:cytosol"/>
    <property type="evidence" value="ECO:0007669"/>
    <property type="project" value="TreeGrafter"/>
</dbReference>
<dbReference type="GO" id="GO:0002161">
    <property type="term" value="F:aminoacyl-tRNA deacylase activity"/>
    <property type="evidence" value="ECO:0007669"/>
    <property type="project" value="InterPro"/>
</dbReference>
<dbReference type="GO" id="GO:0005524">
    <property type="term" value="F:ATP binding"/>
    <property type="evidence" value="ECO:0007669"/>
    <property type="project" value="UniProtKB-UniRule"/>
</dbReference>
<dbReference type="GO" id="GO:0004827">
    <property type="term" value="F:proline-tRNA ligase activity"/>
    <property type="evidence" value="ECO:0007669"/>
    <property type="project" value="UniProtKB-UniRule"/>
</dbReference>
<dbReference type="GO" id="GO:0006433">
    <property type="term" value="P:prolyl-tRNA aminoacylation"/>
    <property type="evidence" value="ECO:0007669"/>
    <property type="project" value="UniProtKB-UniRule"/>
</dbReference>
<dbReference type="CDD" id="cd04334">
    <property type="entry name" value="ProRS-INS"/>
    <property type="match status" value="1"/>
</dbReference>
<dbReference type="CDD" id="cd00861">
    <property type="entry name" value="ProRS_anticodon_short"/>
    <property type="match status" value="1"/>
</dbReference>
<dbReference type="CDD" id="cd00779">
    <property type="entry name" value="ProRS_core_prok"/>
    <property type="match status" value="1"/>
</dbReference>
<dbReference type="FunFam" id="3.30.930.10:FF:000012">
    <property type="entry name" value="Proline--tRNA ligase"/>
    <property type="match status" value="1"/>
</dbReference>
<dbReference type="FunFam" id="3.30.930.10:FF:000097">
    <property type="entry name" value="Proline--tRNA ligase"/>
    <property type="match status" value="1"/>
</dbReference>
<dbReference type="FunFam" id="3.40.50.800:FF:000006">
    <property type="entry name" value="Proline--tRNA ligase"/>
    <property type="match status" value="1"/>
</dbReference>
<dbReference type="FunFam" id="3.90.960.10:FF:000001">
    <property type="entry name" value="Proline--tRNA ligase"/>
    <property type="match status" value="1"/>
</dbReference>
<dbReference type="Gene3D" id="3.40.50.800">
    <property type="entry name" value="Anticodon-binding domain"/>
    <property type="match status" value="1"/>
</dbReference>
<dbReference type="Gene3D" id="3.30.930.10">
    <property type="entry name" value="Bira Bifunctional Protein, Domain 2"/>
    <property type="match status" value="2"/>
</dbReference>
<dbReference type="Gene3D" id="3.90.960.10">
    <property type="entry name" value="YbaK/aminoacyl-tRNA synthetase-associated domain"/>
    <property type="match status" value="1"/>
</dbReference>
<dbReference type="HAMAP" id="MF_01569">
    <property type="entry name" value="Pro_tRNA_synth_type1"/>
    <property type="match status" value="1"/>
</dbReference>
<dbReference type="InterPro" id="IPR002314">
    <property type="entry name" value="aa-tRNA-synt_IIb"/>
</dbReference>
<dbReference type="InterPro" id="IPR006195">
    <property type="entry name" value="aa-tRNA-synth_II"/>
</dbReference>
<dbReference type="InterPro" id="IPR045864">
    <property type="entry name" value="aa-tRNA-synth_II/BPL/LPL"/>
</dbReference>
<dbReference type="InterPro" id="IPR004154">
    <property type="entry name" value="Anticodon-bd"/>
</dbReference>
<dbReference type="InterPro" id="IPR036621">
    <property type="entry name" value="Anticodon-bd_dom_sf"/>
</dbReference>
<dbReference type="InterPro" id="IPR002316">
    <property type="entry name" value="Pro-tRNA-ligase_IIa"/>
</dbReference>
<dbReference type="InterPro" id="IPR004500">
    <property type="entry name" value="Pro-tRNA-synth_IIa_bac-type"/>
</dbReference>
<dbReference type="InterPro" id="IPR023717">
    <property type="entry name" value="Pro-tRNA-Synthase_IIa_type1"/>
</dbReference>
<dbReference type="InterPro" id="IPR050062">
    <property type="entry name" value="Pro-tRNA_synthetase"/>
</dbReference>
<dbReference type="InterPro" id="IPR044140">
    <property type="entry name" value="ProRS_anticodon_short"/>
</dbReference>
<dbReference type="InterPro" id="IPR033730">
    <property type="entry name" value="ProRS_core_prok"/>
</dbReference>
<dbReference type="InterPro" id="IPR036754">
    <property type="entry name" value="YbaK/aa-tRNA-synt-asso_dom_sf"/>
</dbReference>
<dbReference type="InterPro" id="IPR007214">
    <property type="entry name" value="YbaK/aa-tRNA-synth-assoc-dom"/>
</dbReference>
<dbReference type="NCBIfam" id="NF006625">
    <property type="entry name" value="PRK09194.1"/>
    <property type="match status" value="1"/>
</dbReference>
<dbReference type="NCBIfam" id="TIGR00409">
    <property type="entry name" value="proS_fam_II"/>
    <property type="match status" value="1"/>
</dbReference>
<dbReference type="PANTHER" id="PTHR42753">
    <property type="entry name" value="MITOCHONDRIAL RIBOSOME PROTEIN L39/PROLYL-TRNA LIGASE FAMILY MEMBER"/>
    <property type="match status" value="1"/>
</dbReference>
<dbReference type="PANTHER" id="PTHR42753:SF2">
    <property type="entry name" value="PROLINE--TRNA LIGASE"/>
    <property type="match status" value="1"/>
</dbReference>
<dbReference type="Pfam" id="PF03129">
    <property type="entry name" value="HGTP_anticodon"/>
    <property type="match status" value="1"/>
</dbReference>
<dbReference type="Pfam" id="PF00587">
    <property type="entry name" value="tRNA-synt_2b"/>
    <property type="match status" value="1"/>
</dbReference>
<dbReference type="Pfam" id="PF04073">
    <property type="entry name" value="tRNA_edit"/>
    <property type="match status" value="1"/>
</dbReference>
<dbReference type="PIRSF" id="PIRSF001535">
    <property type="entry name" value="ProRS_1"/>
    <property type="match status" value="1"/>
</dbReference>
<dbReference type="PRINTS" id="PR01046">
    <property type="entry name" value="TRNASYNTHPRO"/>
</dbReference>
<dbReference type="SUPFAM" id="SSF52954">
    <property type="entry name" value="Class II aaRS ABD-related"/>
    <property type="match status" value="1"/>
</dbReference>
<dbReference type="SUPFAM" id="SSF55681">
    <property type="entry name" value="Class II aaRS and biotin synthetases"/>
    <property type="match status" value="1"/>
</dbReference>
<dbReference type="SUPFAM" id="SSF55826">
    <property type="entry name" value="YbaK/ProRS associated domain"/>
    <property type="match status" value="1"/>
</dbReference>
<dbReference type="PROSITE" id="PS50862">
    <property type="entry name" value="AA_TRNA_LIGASE_II"/>
    <property type="match status" value="1"/>
</dbReference>
<evidence type="ECO:0000255" key="1">
    <source>
        <dbReference type="HAMAP-Rule" id="MF_01569"/>
    </source>
</evidence>
<proteinExistence type="inferred from homology"/>
<reference key="1">
    <citation type="submission" date="2007-09" db="EMBL/GenBank/DDBJ databases">
        <title>Complete sequence of chromosome of Serratia proteamaculans 568.</title>
        <authorList>
            <consortium name="US DOE Joint Genome Institute"/>
            <person name="Copeland A."/>
            <person name="Lucas S."/>
            <person name="Lapidus A."/>
            <person name="Barry K."/>
            <person name="Glavina del Rio T."/>
            <person name="Dalin E."/>
            <person name="Tice H."/>
            <person name="Pitluck S."/>
            <person name="Chain P."/>
            <person name="Malfatti S."/>
            <person name="Shin M."/>
            <person name="Vergez L."/>
            <person name="Schmutz J."/>
            <person name="Larimer F."/>
            <person name="Land M."/>
            <person name="Hauser L."/>
            <person name="Kyrpides N."/>
            <person name="Kim E."/>
            <person name="Taghavi S."/>
            <person name="Newman L."/>
            <person name="Vangronsveld J."/>
            <person name="van der Lelie D."/>
            <person name="Richardson P."/>
        </authorList>
    </citation>
    <scope>NUCLEOTIDE SEQUENCE [LARGE SCALE GENOMIC DNA]</scope>
    <source>
        <strain>568</strain>
    </source>
</reference>
<organism>
    <name type="scientific">Serratia proteamaculans (strain 568)</name>
    <dbReference type="NCBI Taxonomy" id="399741"/>
    <lineage>
        <taxon>Bacteria</taxon>
        <taxon>Pseudomonadati</taxon>
        <taxon>Pseudomonadota</taxon>
        <taxon>Gammaproteobacteria</taxon>
        <taxon>Enterobacterales</taxon>
        <taxon>Yersiniaceae</taxon>
        <taxon>Serratia</taxon>
    </lineage>
</organism>
<keyword id="KW-0030">Aminoacyl-tRNA synthetase</keyword>
<keyword id="KW-0067">ATP-binding</keyword>
<keyword id="KW-0963">Cytoplasm</keyword>
<keyword id="KW-0436">Ligase</keyword>
<keyword id="KW-0547">Nucleotide-binding</keyword>
<keyword id="KW-0648">Protein biosynthesis</keyword>